<reference key="1">
    <citation type="journal article" date="2004" name="Nat. Genet.">
        <title>Complete sequencing and characterization of 21,243 full-length human cDNAs.</title>
        <authorList>
            <person name="Ota T."/>
            <person name="Suzuki Y."/>
            <person name="Nishikawa T."/>
            <person name="Otsuki T."/>
            <person name="Sugiyama T."/>
            <person name="Irie R."/>
            <person name="Wakamatsu A."/>
            <person name="Hayashi K."/>
            <person name="Sato H."/>
            <person name="Nagai K."/>
            <person name="Kimura K."/>
            <person name="Makita H."/>
            <person name="Sekine M."/>
            <person name="Obayashi M."/>
            <person name="Nishi T."/>
            <person name="Shibahara T."/>
            <person name="Tanaka T."/>
            <person name="Ishii S."/>
            <person name="Yamamoto J."/>
            <person name="Saito K."/>
            <person name="Kawai Y."/>
            <person name="Isono Y."/>
            <person name="Nakamura Y."/>
            <person name="Nagahari K."/>
            <person name="Murakami K."/>
            <person name="Yasuda T."/>
            <person name="Iwayanagi T."/>
            <person name="Wagatsuma M."/>
            <person name="Shiratori A."/>
            <person name="Sudo H."/>
            <person name="Hosoiri T."/>
            <person name="Kaku Y."/>
            <person name="Kodaira H."/>
            <person name="Kondo H."/>
            <person name="Sugawara M."/>
            <person name="Takahashi M."/>
            <person name="Kanda K."/>
            <person name="Yokoi T."/>
            <person name="Furuya T."/>
            <person name="Kikkawa E."/>
            <person name="Omura Y."/>
            <person name="Abe K."/>
            <person name="Kamihara K."/>
            <person name="Katsuta N."/>
            <person name="Sato K."/>
            <person name="Tanikawa M."/>
            <person name="Yamazaki M."/>
            <person name="Ninomiya K."/>
            <person name="Ishibashi T."/>
            <person name="Yamashita H."/>
            <person name="Murakawa K."/>
            <person name="Fujimori K."/>
            <person name="Tanai H."/>
            <person name="Kimata M."/>
            <person name="Watanabe M."/>
            <person name="Hiraoka S."/>
            <person name="Chiba Y."/>
            <person name="Ishida S."/>
            <person name="Ono Y."/>
            <person name="Takiguchi S."/>
            <person name="Watanabe S."/>
            <person name="Yosida M."/>
            <person name="Hotuta T."/>
            <person name="Kusano J."/>
            <person name="Kanehori K."/>
            <person name="Takahashi-Fujii A."/>
            <person name="Hara H."/>
            <person name="Tanase T.-O."/>
            <person name="Nomura Y."/>
            <person name="Togiya S."/>
            <person name="Komai F."/>
            <person name="Hara R."/>
            <person name="Takeuchi K."/>
            <person name="Arita M."/>
            <person name="Imose N."/>
            <person name="Musashino K."/>
            <person name="Yuuki H."/>
            <person name="Oshima A."/>
            <person name="Sasaki N."/>
            <person name="Aotsuka S."/>
            <person name="Yoshikawa Y."/>
            <person name="Matsunawa H."/>
            <person name="Ichihara T."/>
            <person name="Shiohata N."/>
            <person name="Sano S."/>
            <person name="Moriya S."/>
            <person name="Momiyama H."/>
            <person name="Satoh N."/>
            <person name="Takami S."/>
            <person name="Terashima Y."/>
            <person name="Suzuki O."/>
            <person name="Nakagawa S."/>
            <person name="Senoh A."/>
            <person name="Mizoguchi H."/>
            <person name="Goto Y."/>
            <person name="Shimizu F."/>
            <person name="Wakebe H."/>
            <person name="Hishigaki H."/>
            <person name="Watanabe T."/>
            <person name="Sugiyama A."/>
            <person name="Takemoto M."/>
            <person name="Kawakami B."/>
            <person name="Yamazaki M."/>
            <person name="Watanabe K."/>
            <person name="Kumagai A."/>
            <person name="Itakura S."/>
            <person name="Fukuzumi Y."/>
            <person name="Fujimori Y."/>
            <person name="Komiyama M."/>
            <person name="Tashiro H."/>
            <person name="Tanigami A."/>
            <person name="Fujiwara T."/>
            <person name="Ono T."/>
            <person name="Yamada K."/>
            <person name="Fujii Y."/>
            <person name="Ozaki K."/>
            <person name="Hirao M."/>
            <person name="Ohmori Y."/>
            <person name="Kawabata A."/>
            <person name="Hikiji T."/>
            <person name="Kobatake N."/>
            <person name="Inagaki H."/>
            <person name="Ikema Y."/>
            <person name="Okamoto S."/>
            <person name="Okitani R."/>
            <person name="Kawakami T."/>
            <person name="Noguchi S."/>
            <person name="Itoh T."/>
            <person name="Shigeta K."/>
            <person name="Senba T."/>
            <person name="Matsumura K."/>
            <person name="Nakajima Y."/>
            <person name="Mizuno T."/>
            <person name="Morinaga M."/>
            <person name="Sasaki M."/>
            <person name="Togashi T."/>
            <person name="Oyama M."/>
            <person name="Hata H."/>
            <person name="Watanabe M."/>
            <person name="Komatsu T."/>
            <person name="Mizushima-Sugano J."/>
            <person name="Satoh T."/>
            <person name="Shirai Y."/>
            <person name="Takahashi Y."/>
            <person name="Nakagawa K."/>
            <person name="Okumura K."/>
            <person name="Nagase T."/>
            <person name="Nomura N."/>
            <person name="Kikuchi H."/>
            <person name="Masuho Y."/>
            <person name="Yamashita R."/>
            <person name="Nakai K."/>
            <person name="Yada T."/>
            <person name="Nakamura Y."/>
            <person name="Ohara O."/>
            <person name="Isogai T."/>
            <person name="Sugano S."/>
        </authorList>
    </citation>
    <scope>NUCLEOTIDE SEQUENCE [LARGE SCALE MRNA] (ISOFORM 1)</scope>
    <scope>VARIANT LEU-431</scope>
    <source>
        <tissue>Testis</tissue>
    </source>
</reference>
<reference key="2">
    <citation type="journal article" date="2005" name="Nature">
        <title>Generation and annotation of the DNA sequences of human chromosomes 2 and 4.</title>
        <authorList>
            <person name="Hillier L.W."/>
            <person name="Graves T.A."/>
            <person name="Fulton R.S."/>
            <person name="Fulton L.A."/>
            <person name="Pepin K.H."/>
            <person name="Minx P."/>
            <person name="Wagner-McPherson C."/>
            <person name="Layman D."/>
            <person name="Wylie K."/>
            <person name="Sekhon M."/>
            <person name="Becker M.C."/>
            <person name="Fewell G.A."/>
            <person name="Delehaunty K.D."/>
            <person name="Miner T.L."/>
            <person name="Nash W.E."/>
            <person name="Kremitzki C."/>
            <person name="Oddy L."/>
            <person name="Du H."/>
            <person name="Sun H."/>
            <person name="Bradshaw-Cordum H."/>
            <person name="Ali J."/>
            <person name="Carter J."/>
            <person name="Cordes M."/>
            <person name="Harris A."/>
            <person name="Isak A."/>
            <person name="van Brunt A."/>
            <person name="Nguyen C."/>
            <person name="Du F."/>
            <person name="Courtney L."/>
            <person name="Kalicki J."/>
            <person name="Ozersky P."/>
            <person name="Abbott S."/>
            <person name="Armstrong J."/>
            <person name="Belter E.A."/>
            <person name="Caruso L."/>
            <person name="Cedroni M."/>
            <person name="Cotton M."/>
            <person name="Davidson T."/>
            <person name="Desai A."/>
            <person name="Elliott G."/>
            <person name="Erb T."/>
            <person name="Fronick C."/>
            <person name="Gaige T."/>
            <person name="Haakenson W."/>
            <person name="Haglund K."/>
            <person name="Holmes A."/>
            <person name="Harkins R."/>
            <person name="Kim K."/>
            <person name="Kruchowski S.S."/>
            <person name="Strong C.M."/>
            <person name="Grewal N."/>
            <person name="Goyea E."/>
            <person name="Hou S."/>
            <person name="Levy A."/>
            <person name="Martinka S."/>
            <person name="Mead K."/>
            <person name="McLellan M.D."/>
            <person name="Meyer R."/>
            <person name="Randall-Maher J."/>
            <person name="Tomlinson C."/>
            <person name="Dauphin-Kohlberg S."/>
            <person name="Kozlowicz-Reilly A."/>
            <person name="Shah N."/>
            <person name="Swearengen-Shahid S."/>
            <person name="Snider J."/>
            <person name="Strong J.T."/>
            <person name="Thompson J."/>
            <person name="Yoakum M."/>
            <person name="Leonard S."/>
            <person name="Pearman C."/>
            <person name="Trani L."/>
            <person name="Radionenko M."/>
            <person name="Waligorski J.E."/>
            <person name="Wang C."/>
            <person name="Rock S.M."/>
            <person name="Tin-Wollam A.-M."/>
            <person name="Maupin R."/>
            <person name="Latreille P."/>
            <person name="Wendl M.C."/>
            <person name="Yang S.-P."/>
            <person name="Pohl C."/>
            <person name="Wallis J.W."/>
            <person name="Spieth J."/>
            <person name="Bieri T.A."/>
            <person name="Berkowicz N."/>
            <person name="Nelson J.O."/>
            <person name="Osborne J."/>
            <person name="Ding L."/>
            <person name="Meyer R."/>
            <person name="Sabo A."/>
            <person name="Shotland Y."/>
            <person name="Sinha P."/>
            <person name="Wohldmann P.E."/>
            <person name="Cook L.L."/>
            <person name="Hickenbotham M.T."/>
            <person name="Eldred J."/>
            <person name="Williams D."/>
            <person name="Jones T.A."/>
            <person name="She X."/>
            <person name="Ciccarelli F.D."/>
            <person name="Izaurralde E."/>
            <person name="Taylor J."/>
            <person name="Schmutz J."/>
            <person name="Myers R.M."/>
            <person name="Cox D.R."/>
            <person name="Huang X."/>
            <person name="McPherson J.D."/>
            <person name="Mardis E.R."/>
            <person name="Clifton S.W."/>
            <person name="Warren W.C."/>
            <person name="Chinwalla A.T."/>
            <person name="Eddy S.R."/>
            <person name="Marra M.A."/>
            <person name="Ovcharenko I."/>
            <person name="Furey T.S."/>
            <person name="Miller W."/>
            <person name="Eichler E.E."/>
            <person name="Bork P."/>
            <person name="Suyama M."/>
            <person name="Torrents D."/>
            <person name="Waterston R.H."/>
            <person name="Wilson R.K."/>
        </authorList>
    </citation>
    <scope>NUCLEOTIDE SEQUENCE [LARGE SCALE GENOMIC DNA]</scope>
</reference>
<reference key="3">
    <citation type="journal article" date="2004" name="Genome Res.">
        <title>The status, quality, and expansion of the NIH full-length cDNA project: the Mammalian Gene Collection (MGC).</title>
        <authorList>
            <consortium name="The MGC Project Team"/>
        </authorList>
    </citation>
    <scope>NUCLEOTIDE SEQUENCE [LARGE SCALE MRNA] (ISOFORM 2)</scope>
    <scope>VARIANT ILE-153</scope>
    <source>
        <tissue>Brain</tissue>
    </source>
</reference>
<reference key="4">
    <citation type="journal article" date="2016" name="Biochem. Biophys. Res. Commun.">
        <title>ANKRD53 interacts with DDA3 and regulates chromosome integrity during mitosis.</title>
        <authorList>
            <person name="Kim S."/>
            <person name="Jang C.Y."/>
        </authorList>
    </citation>
    <scope>FUNCTION</scope>
    <scope>INTERACTION WITH PSRC1</scope>
    <scope>SUBCELLULAR LOCATION</scope>
    <scope>PHOSPHORYLATION</scope>
</reference>
<accession>Q8N9V6</accession>
<accession>Q8IYP8</accession>
<proteinExistence type="evidence at protein level"/>
<gene>
    <name type="primary">ANKRD53</name>
</gene>
<comment type="function">
    <text evidence="4">Required for normal progression through mitosis. Involved in chromosome alignment and cytokinesis via regulation of microtubules polymerization.</text>
</comment>
<comment type="subunit">
    <text evidence="4">Interacts with PSRC1; recruited by PSRC1 to the spindle during mitosis (PubMed:26820536).</text>
</comment>
<comment type="interaction">
    <interactant intactId="EBI-13345447">
        <id>Q8N9V6-2</id>
    </interactant>
    <interactant intactId="EBI-765407">
        <id>P41182</id>
        <label>BCL6</label>
    </interactant>
    <organismsDiffer>false</organismsDiffer>
    <experiments>3</experiments>
</comment>
<comment type="interaction">
    <interactant intactId="EBI-13345447">
        <id>Q8N9V6-2</id>
    </interactant>
    <interactant intactId="EBI-748515">
        <id>Q8IVS8</id>
        <label>GLYCTK</label>
    </interactant>
    <organismsDiffer>false</organismsDiffer>
    <experiments>3</experiments>
</comment>
<comment type="subcellular location">
    <subcellularLocation>
        <location evidence="4">Cytoplasm</location>
        <location evidence="4">Cytoskeleton</location>
        <location evidence="4">Spindle</location>
    </subcellularLocation>
    <subcellularLocation>
        <location evidence="4">Cytoplasm</location>
        <location evidence="4">Cytoskeleton</location>
        <location evidence="4">Spindle pole</location>
    </subcellularLocation>
    <text evidence="4">Localizes at the spindle around the centrosome at prophase and prometaphase and at the spindle poles at metaphase and anaphase (PubMed:26820536).</text>
</comment>
<comment type="alternative products">
    <event type="alternative splicing"/>
    <isoform>
        <id>Q8N9V6-1</id>
        <name>1</name>
        <sequence type="displayed"/>
    </isoform>
    <isoform>
        <id>Q8N9V6-2</id>
        <name>2</name>
        <sequence type="described" ref="VSP_022768 VSP_022769"/>
    </isoform>
</comment>
<comment type="PTM">
    <text evidence="4">Phosphorylated during mitosis (PubMed:26820536).</text>
</comment>
<protein>
    <recommendedName>
        <fullName>Ankyrin repeat domain-containing protein 53</fullName>
    </recommendedName>
</protein>
<evidence type="ECO:0000256" key="1">
    <source>
        <dbReference type="SAM" id="MobiDB-lite"/>
    </source>
</evidence>
<evidence type="ECO:0000269" key="2">
    <source>
    </source>
</evidence>
<evidence type="ECO:0000269" key="3">
    <source>
    </source>
</evidence>
<evidence type="ECO:0000269" key="4">
    <source>
    </source>
</evidence>
<evidence type="ECO:0000303" key="5">
    <source>
    </source>
</evidence>
<evidence type="ECO:0000305" key="6"/>
<organism>
    <name type="scientific">Homo sapiens</name>
    <name type="common">Human</name>
    <dbReference type="NCBI Taxonomy" id="9606"/>
    <lineage>
        <taxon>Eukaryota</taxon>
        <taxon>Metazoa</taxon>
        <taxon>Chordata</taxon>
        <taxon>Craniata</taxon>
        <taxon>Vertebrata</taxon>
        <taxon>Euteleostomi</taxon>
        <taxon>Mammalia</taxon>
        <taxon>Eutheria</taxon>
        <taxon>Euarchontoglires</taxon>
        <taxon>Primates</taxon>
        <taxon>Haplorrhini</taxon>
        <taxon>Catarrhini</taxon>
        <taxon>Hominidae</taxon>
        <taxon>Homo</taxon>
    </lineage>
</organism>
<feature type="chain" id="PRO_0000274490" description="Ankyrin repeat domain-containing protein 53">
    <location>
        <begin position="1"/>
        <end position="530"/>
    </location>
</feature>
<feature type="repeat" description="ANK 1">
    <location>
        <begin position="139"/>
        <end position="169"/>
    </location>
</feature>
<feature type="repeat" description="ANK 2">
    <location>
        <begin position="173"/>
        <end position="206"/>
    </location>
</feature>
<feature type="repeat" description="ANK 3">
    <location>
        <begin position="210"/>
        <end position="239"/>
    </location>
</feature>
<feature type="region of interest" description="Disordered" evidence="1">
    <location>
        <begin position="1"/>
        <end position="99"/>
    </location>
</feature>
<feature type="region of interest" description="Disordered" evidence="1">
    <location>
        <begin position="323"/>
        <end position="360"/>
    </location>
</feature>
<feature type="region of interest" description="Disordered" evidence="1">
    <location>
        <begin position="383"/>
        <end position="402"/>
    </location>
</feature>
<feature type="compositionally biased region" description="Low complexity" evidence="1">
    <location>
        <begin position="1"/>
        <end position="15"/>
    </location>
</feature>
<feature type="compositionally biased region" description="Polar residues" evidence="1">
    <location>
        <begin position="32"/>
        <end position="41"/>
    </location>
</feature>
<feature type="compositionally biased region" description="Polar residues" evidence="1">
    <location>
        <begin position="326"/>
        <end position="341"/>
    </location>
</feature>
<feature type="compositionally biased region" description="Polar residues" evidence="1">
    <location>
        <begin position="386"/>
        <end position="402"/>
    </location>
</feature>
<feature type="splice variant" id="VSP_022768" description="In isoform 2." evidence="5">
    <original>KEHKILREAAIRKWLHGKLHPGHSLVSNTKQARATALSKTPE</original>
    <variation>GQGCSVHFPFAFSPITPETLLWQDISLLSDCGFLWRRRELSF</variation>
    <location>
        <begin position="302"/>
        <end position="343"/>
    </location>
</feature>
<feature type="splice variant" id="VSP_022769" description="In isoform 2." evidence="5">
    <location>
        <begin position="344"/>
        <end position="530"/>
    </location>
</feature>
<feature type="sequence variant" id="VAR_061018" description="In dbSNP:rs35096506.">
    <original>A</original>
    <variation>G</variation>
    <location>
        <position position="105"/>
    </location>
</feature>
<feature type="sequence variant" id="VAR_030300" description="In dbSNP:rs17853403." evidence="3">
    <original>L</original>
    <variation>I</variation>
    <location>
        <position position="153"/>
    </location>
</feature>
<feature type="sequence variant" id="VAR_054427" description="In dbSNP:rs36123544.">
    <original>M</original>
    <variation>T</variation>
    <location>
        <position position="243"/>
    </location>
</feature>
<feature type="sequence variant" id="VAR_067464" description="In dbSNP:rs11688921.">
    <original>R</original>
    <variation>L</variation>
    <location>
        <position position="349"/>
    </location>
</feature>
<feature type="sequence variant" id="VAR_067465" description="In dbSNP:rs3796100." evidence="2">
    <original>H</original>
    <variation>L</variation>
    <location>
        <position position="431"/>
    </location>
</feature>
<feature type="sequence conflict" description="In Ref. 1; BAC04181." evidence="6" ref="1">
    <original>L</original>
    <variation>P</variation>
    <location>
        <position position="523"/>
    </location>
</feature>
<dbReference type="EMBL" id="AK093479">
    <property type="protein sequence ID" value="BAC04181.1"/>
    <property type="molecule type" value="mRNA"/>
</dbReference>
<dbReference type="EMBL" id="AC007040">
    <property type="status" value="NOT_ANNOTATED_CDS"/>
    <property type="molecule type" value="Genomic_DNA"/>
</dbReference>
<dbReference type="EMBL" id="BC035234">
    <property type="protein sequence ID" value="AAH35234.1"/>
    <property type="molecule type" value="mRNA"/>
</dbReference>
<dbReference type="CCDS" id="CCDS1913.1">
    <molecule id="Q8N9V6-2"/>
</dbReference>
<dbReference type="CCDS" id="CCDS46321.1">
    <molecule id="Q8N9V6-1"/>
</dbReference>
<dbReference type="RefSeq" id="NP_001108588.1">
    <molecule id="Q8N9V6-1"/>
    <property type="nucleotide sequence ID" value="NM_001115116.2"/>
</dbReference>
<dbReference type="RefSeq" id="NP_079209.3">
    <molecule id="Q8N9V6-2"/>
    <property type="nucleotide sequence ID" value="NM_024933.3"/>
</dbReference>
<dbReference type="SMR" id="Q8N9V6"/>
<dbReference type="BioGRID" id="123057">
    <property type="interactions" value="4"/>
</dbReference>
<dbReference type="FunCoup" id="Q8N9V6">
    <property type="interactions" value="39"/>
</dbReference>
<dbReference type="IntAct" id="Q8N9V6">
    <property type="interactions" value="3"/>
</dbReference>
<dbReference type="STRING" id="9606.ENSP00000353796"/>
<dbReference type="GlyGen" id="Q8N9V6">
    <property type="glycosylation" value="4 sites, 2 N-linked glycans (2 sites)"/>
</dbReference>
<dbReference type="iPTMnet" id="Q8N9V6"/>
<dbReference type="PhosphoSitePlus" id="Q8N9V6"/>
<dbReference type="BioMuta" id="ANKRD53"/>
<dbReference type="DMDM" id="387912915"/>
<dbReference type="jPOST" id="Q8N9V6"/>
<dbReference type="MassIVE" id="Q8N9V6"/>
<dbReference type="PaxDb" id="9606-ENSP00000353796"/>
<dbReference type="PeptideAtlas" id="Q8N9V6"/>
<dbReference type="ProteomicsDB" id="72590">
    <molecule id="Q8N9V6-1"/>
</dbReference>
<dbReference type="Antibodypedia" id="53588">
    <property type="antibodies" value="182 antibodies from 17 providers"/>
</dbReference>
<dbReference type="DNASU" id="79998"/>
<dbReference type="Ensembl" id="ENST00000272421.10">
    <molecule id="Q8N9V6-2"/>
    <property type="protein sequence ID" value="ENSP00000272421.6"/>
    <property type="gene ID" value="ENSG00000144031.12"/>
</dbReference>
<dbReference type="Ensembl" id="ENST00000360589.4">
    <molecule id="Q8N9V6-1"/>
    <property type="protein sequence ID" value="ENSP00000353796.3"/>
    <property type="gene ID" value="ENSG00000144031.12"/>
</dbReference>
<dbReference type="GeneID" id="79998"/>
<dbReference type="KEGG" id="hsa:79998"/>
<dbReference type="MANE-Select" id="ENST00000360589.4">
    <property type="protein sequence ID" value="ENSP00000353796.3"/>
    <property type="RefSeq nucleotide sequence ID" value="NM_001115116.2"/>
    <property type="RefSeq protein sequence ID" value="NP_001108588.1"/>
</dbReference>
<dbReference type="UCSC" id="uc002shk.5">
    <molecule id="Q8N9V6-1"/>
    <property type="organism name" value="human"/>
</dbReference>
<dbReference type="AGR" id="HGNC:25691"/>
<dbReference type="CTD" id="79998"/>
<dbReference type="GeneCards" id="ANKRD53"/>
<dbReference type="HGNC" id="HGNC:25691">
    <property type="gene designation" value="ANKRD53"/>
</dbReference>
<dbReference type="HPA" id="ENSG00000144031">
    <property type="expression patterns" value="Tissue enhanced (testis)"/>
</dbReference>
<dbReference type="MIM" id="617009">
    <property type="type" value="gene"/>
</dbReference>
<dbReference type="neXtProt" id="NX_Q8N9V6"/>
<dbReference type="OpenTargets" id="ENSG00000144031"/>
<dbReference type="PharmGKB" id="PA144596517"/>
<dbReference type="VEuPathDB" id="HostDB:ENSG00000144031"/>
<dbReference type="eggNOG" id="KOG4177">
    <property type="taxonomic scope" value="Eukaryota"/>
</dbReference>
<dbReference type="GeneTree" id="ENSGT00390000005650"/>
<dbReference type="HOGENOM" id="CLU_074833_0_0_1"/>
<dbReference type="InParanoid" id="Q8N9V6"/>
<dbReference type="OMA" id="NHRICAR"/>
<dbReference type="OrthoDB" id="10254927at2759"/>
<dbReference type="PAN-GO" id="Q8N9V6">
    <property type="GO annotations" value="5 GO annotations based on evolutionary models"/>
</dbReference>
<dbReference type="PhylomeDB" id="Q8N9V6"/>
<dbReference type="TreeFam" id="TF351267"/>
<dbReference type="PathwayCommons" id="Q8N9V6"/>
<dbReference type="SignaLink" id="Q8N9V6"/>
<dbReference type="BioGRID-ORCS" id="79998">
    <property type="hits" value="15 hits in 1136 CRISPR screens"/>
</dbReference>
<dbReference type="ChiTaRS" id="ANKRD53">
    <property type="organism name" value="human"/>
</dbReference>
<dbReference type="GenomeRNAi" id="79998"/>
<dbReference type="Pharos" id="Q8N9V6">
    <property type="development level" value="Tbio"/>
</dbReference>
<dbReference type="PRO" id="PR:Q8N9V6"/>
<dbReference type="Proteomes" id="UP000005640">
    <property type="component" value="Chromosome 2"/>
</dbReference>
<dbReference type="RNAct" id="Q8N9V6">
    <property type="molecule type" value="protein"/>
</dbReference>
<dbReference type="Bgee" id="ENSG00000144031">
    <property type="expression patterns" value="Expressed in male germ line stem cell (sensu Vertebrata) in testis and 121 other cell types or tissues"/>
</dbReference>
<dbReference type="ExpressionAtlas" id="Q8N9V6">
    <property type="expression patterns" value="baseline and differential"/>
</dbReference>
<dbReference type="GO" id="GO:0005737">
    <property type="term" value="C:cytoplasm"/>
    <property type="evidence" value="ECO:0007669"/>
    <property type="project" value="UniProtKB-KW"/>
</dbReference>
<dbReference type="GO" id="GO:0005819">
    <property type="term" value="C:spindle"/>
    <property type="evidence" value="ECO:0000314"/>
    <property type="project" value="UniProtKB"/>
</dbReference>
<dbReference type="GO" id="GO:0000922">
    <property type="term" value="C:spindle pole"/>
    <property type="evidence" value="ECO:0000314"/>
    <property type="project" value="UniProtKB"/>
</dbReference>
<dbReference type="GO" id="GO:0051301">
    <property type="term" value="P:cell division"/>
    <property type="evidence" value="ECO:0007669"/>
    <property type="project" value="UniProtKB-KW"/>
</dbReference>
<dbReference type="GO" id="GO:0007080">
    <property type="term" value="P:mitotic metaphase chromosome alignment"/>
    <property type="evidence" value="ECO:0000315"/>
    <property type="project" value="UniProtKB"/>
</dbReference>
<dbReference type="GO" id="GO:0031116">
    <property type="term" value="P:positive regulation of microtubule polymerization"/>
    <property type="evidence" value="ECO:0000315"/>
    <property type="project" value="UniProtKB"/>
</dbReference>
<dbReference type="GO" id="GO:1902412">
    <property type="term" value="P:regulation of mitotic cytokinesis"/>
    <property type="evidence" value="ECO:0000315"/>
    <property type="project" value="UniProtKB"/>
</dbReference>
<dbReference type="GO" id="GO:0060236">
    <property type="term" value="P:regulation of mitotic spindle organization"/>
    <property type="evidence" value="ECO:0000315"/>
    <property type="project" value="UniProtKB"/>
</dbReference>
<dbReference type="FunFam" id="1.25.40.20:FF:000324">
    <property type="entry name" value="Ankyrin repeat domain 53"/>
    <property type="match status" value="1"/>
</dbReference>
<dbReference type="Gene3D" id="1.25.40.20">
    <property type="entry name" value="Ankyrin repeat-containing domain"/>
    <property type="match status" value="1"/>
</dbReference>
<dbReference type="InterPro" id="IPR042335">
    <property type="entry name" value="ANKRD53"/>
</dbReference>
<dbReference type="InterPro" id="IPR002110">
    <property type="entry name" value="Ankyrin_rpt"/>
</dbReference>
<dbReference type="InterPro" id="IPR036770">
    <property type="entry name" value="Ankyrin_rpt-contain_sf"/>
</dbReference>
<dbReference type="PANTHER" id="PTHR24160">
    <property type="entry name" value="ANKYRIN REPEAT DOMAIN-CONTAINING PROTEIN 53"/>
    <property type="match status" value="1"/>
</dbReference>
<dbReference type="PANTHER" id="PTHR24160:SF1">
    <property type="entry name" value="ANKYRIN REPEAT DOMAIN-CONTAINING PROTEIN 53"/>
    <property type="match status" value="1"/>
</dbReference>
<dbReference type="Pfam" id="PF00023">
    <property type="entry name" value="Ank"/>
    <property type="match status" value="1"/>
</dbReference>
<dbReference type="Pfam" id="PF12796">
    <property type="entry name" value="Ank_2"/>
    <property type="match status" value="1"/>
</dbReference>
<dbReference type="SMART" id="SM00248">
    <property type="entry name" value="ANK"/>
    <property type="match status" value="3"/>
</dbReference>
<dbReference type="SUPFAM" id="SSF48403">
    <property type="entry name" value="Ankyrin repeat"/>
    <property type="match status" value="1"/>
</dbReference>
<dbReference type="PROSITE" id="PS50297">
    <property type="entry name" value="ANK_REP_REGION"/>
    <property type="match status" value="1"/>
</dbReference>
<dbReference type="PROSITE" id="PS50088">
    <property type="entry name" value="ANK_REPEAT"/>
    <property type="match status" value="2"/>
</dbReference>
<name>ANR53_HUMAN</name>
<sequence>MASAGSTARRAGSGSWHSERGEGRGARPQPTPSGSMQQANKVSLKATWTDAESKQPSQPLPDLADHLSAQATALARPRRPASLTPPRADPSPSKESDQTAIDQTAIGSYYQLFAAAVGNVEWLRFCLNQSLREIPTDDKGFTAIHFAAQWGKLACLQVLVEEYKFPVDLLTNNSQTPLHLVIHRDNTTVALPCIYYLLEKGADLNAQTCNGSTPLHLAARDGLLDCVKVLVQSGANVHAQDAMGYKPIDFCKIWNHRACARFLKDAMWKKDKKDFAREMTKMKMFKSQLTLMEHNYLIEYQKEHKILREAAIRKWLHGKLHPGHSLVSNTKQARATALSKTPEQRESQRSRSFHPSVDARLQCIPQPTEMPKPIYRKPTVKRPTMWNVSNNPARPPTTQISHSQGIRLGVHPDPTPEHDFSSFLEVRPDGHGGARLHTVDGHWVAPVPRLPFEVLLRMLYPRVWPYRMKVPQGFYPISMREVPRKRHLGDNTFWTDTLAMNLRDTFDEAFLAAVRSHQGLPTLPSPQTNP</sequence>
<keyword id="KW-0025">Alternative splicing</keyword>
<keyword id="KW-0040">ANK repeat</keyword>
<keyword id="KW-0131">Cell cycle</keyword>
<keyword id="KW-0132">Cell division</keyword>
<keyword id="KW-0963">Cytoplasm</keyword>
<keyword id="KW-0206">Cytoskeleton</keyword>
<keyword id="KW-0498">Mitosis</keyword>
<keyword id="KW-0597">Phosphoprotein</keyword>
<keyword id="KW-1267">Proteomics identification</keyword>
<keyword id="KW-1185">Reference proteome</keyword>
<keyword id="KW-0677">Repeat</keyword>